<comment type="function">
    <text evidence="1">One of the components of the core complex of photosystem II (PSII), required for its stability and/or assembly. PSII is a light-driven water:plastoquinone oxidoreductase that uses light energy to abstract electrons from H(2)O, generating O(2) and a proton gradient subsequently used for ATP formation. It consists of a core antenna complex that captures photons, and an electron transfer chain that converts photonic excitation into a charge separation.</text>
</comment>
<comment type="subunit">
    <text evidence="1">PSII is composed of 1 copy each of membrane proteins PsbA, PsbB, PsbC, PsbD, PsbE, PsbF, PsbH, PsbI, PsbJ, PsbK, PsbL, PsbM, PsbT, PsbX, PsbY, PsbZ, Psb30/Ycf12, at least 3 peripheral proteins of the oxygen-evolving complex and a large number of cofactors. It forms dimeric complexes.</text>
</comment>
<comment type="subcellular location">
    <subcellularLocation>
        <location evidence="1">Plastid</location>
        <location evidence="1">Chloroplast thylakoid membrane</location>
        <topology evidence="1">Single-pass membrane protein</topology>
    </subcellularLocation>
</comment>
<comment type="similarity">
    <text evidence="1">Belongs to the PsbI family.</text>
</comment>
<accession>P62105</accession>
<accession>P09970</accession>
<geneLocation type="chloroplast"/>
<keyword id="KW-0150">Chloroplast</keyword>
<keyword id="KW-0472">Membrane</keyword>
<keyword id="KW-0602">Photosynthesis</keyword>
<keyword id="KW-0604">Photosystem II</keyword>
<keyword id="KW-0934">Plastid</keyword>
<keyword id="KW-0674">Reaction center</keyword>
<keyword id="KW-0793">Thylakoid</keyword>
<keyword id="KW-0812">Transmembrane</keyword>
<keyword id="KW-1133">Transmembrane helix</keyword>
<dbReference type="EMBL" id="AP002983">
    <property type="protein sequence ID" value="BAB33202.1"/>
    <property type="molecule type" value="Genomic_DNA"/>
</dbReference>
<dbReference type="RefSeq" id="NP_084804.1">
    <property type="nucleotide sequence ID" value="NC_002694.1"/>
</dbReference>
<dbReference type="SMR" id="P62105"/>
<dbReference type="GeneID" id="802929"/>
<dbReference type="GO" id="GO:0009535">
    <property type="term" value="C:chloroplast thylakoid membrane"/>
    <property type="evidence" value="ECO:0007669"/>
    <property type="project" value="UniProtKB-SubCell"/>
</dbReference>
<dbReference type="GO" id="GO:0009539">
    <property type="term" value="C:photosystem II reaction center"/>
    <property type="evidence" value="ECO:0007669"/>
    <property type="project" value="InterPro"/>
</dbReference>
<dbReference type="GO" id="GO:0015979">
    <property type="term" value="P:photosynthesis"/>
    <property type="evidence" value="ECO:0007669"/>
    <property type="project" value="UniProtKB-UniRule"/>
</dbReference>
<dbReference type="HAMAP" id="MF_01316">
    <property type="entry name" value="PSII_PsbI"/>
    <property type="match status" value="1"/>
</dbReference>
<dbReference type="InterPro" id="IPR003686">
    <property type="entry name" value="PSII_PsbI"/>
</dbReference>
<dbReference type="InterPro" id="IPR037271">
    <property type="entry name" value="PSII_PsbI_sf"/>
</dbReference>
<dbReference type="NCBIfam" id="NF002735">
    <property type="entry name" value="PRK02655.1"/>
    <property type="match status" value="1"/>
</dbReference>
<dbReference type="PANTHER" id="PTHR35772">
    <property type="entry name" value="PHOTOSYSTEM II REACTION CENTER PROTEIN I"/>
    <property type="match status" value="1"/>
</dbReference>
<dbReference type="PANTHER" id="PTHR35772:SF1">
    <property type="entry name" value="PHOTOSYSTEM II REACTION CENTER PROTEIN I"/>
    <property type="match status" value="1"/>
</dbReference>
<dbReference type="Pfam" id="PF02532">
    <property type="entry name" value="PsbI"/>
    <property type="match status" value="1"/>
</dbReference>
<dbReference type="SUPFAM" id="SSF161041">
    <property type="entry name" value="Photosystem II reaction center protein I, PsbI"/>
    <property type="match status" value="1"/>
</dbReference>
<sequence length="36" mass="4168">MLTLKLFVYTVVIFFVSLFIFGFLSNDPGRNPGREE</sequence>
<gene>
    <name evidence="1" type="primary">psbI</name>
</gene>
<proteinExistence type="inferred from homology"/>
<protein>
    <recommendedName>
        <fullName evidence="1">Photosystem II reaction center protein I</fullName>
        <shortName evidence="1">PSII-I</shortName>
    </recommendedName>
    <alternativeName>
        <fullName evidence="1">PSII 4.8 kDa protein</fullName>
    </alternativeName>
</protein>
<evidence type="ECO:0000255" key="1">
    <source>
        <dbReference type="HAMAP-Rule" id="MF_01316"/>
    </source>
</evidence>
<feature type="chain" id="PRO_0000219632" description="Photosystem II reaction center protein I">
    <location>
        <begin position="1"/>
        <end position="36"/>
    </location>
</feature>
<feature type="transmembrane region" description="Helical" evidence="1">
    <location>
        <begin position="4"/>
        <end position="24"/>
    </location>
</feature>
<reference key="1">
    <citation type="journal article" date="2000" name="DNA Res.">
        <title>Complete structure of the chloroplast genome of a legume, Lotus japonicus.</title>
        <authorList>
            <person name="Kato T."/>
            <person name="Kaneko T."/>
            <person name="Sato S."/>
            <person name="Nakamura Y."/>
            <person name="Tabata S."/>
        </authorList>
    </citation>
    <scope>NUCLEOTIDE SEQUENCE [LARGE SCALE GENOMIC DNA]</scope>
    <source>
        <strain>cv. Miyakojima MG-20</strain>
    </source>
</reference>
<organism>
    <name type="scientific">Lotus japonicus</name>
    <name type="common">Lotus corniculatus var. japonicus</name>
    <dbReference type="NCBI Taxonomy" id="34305"/>
    <lineage>
        <taxon>Eukaryota</taxon>
        <taxon>Viridiplantae</taxon>
        <taxon>Streptophyta</taxon>
        <taxon>Embryophyta</taxon>
        <taxon>Tracheophyta</taxon>
        <taxon>Spermatophyta</taxon>
        <taxon>Magnoliopsida</taxon>
        <taxon>eudicotyledons</taxon>
        <taxon>Gunneridae</taxon>
        <taxon>Pentapetalae</taxon>
        <taxon>rosids</taxon>
        <taxon>fabids</taxon>
        <taxon>Fabales</taxon>
        <taxon>Fabaceae</taxon>
        <taxon>Papilionoideae</taxon>
        <taxon>50 kb inversion clade</taxon>
        <taxon>NPAAA clade</taxon>
        <taxon>Hologalegina</taxon>
        <taxon>robinioid clade</taxon>
        <taxon>Loteae</taxon>
        <taxon>Lotus</taxon>
    </lineage>
</organism>
<name>PSBI_LOTJA</name>